<dbReference type="EC" id="1.14.19.47" evidence="3"/>
<dbReference type="EMBL" id="AJ222980">
    <property type="protein sequence ID" value="CAA11032.1"/>
    <property type="molecule type" value="mRNA"/>
</dbReference>
<dbReference type="EMBL" id="AJ222981">
    <property type="protein sequence ID" value="CAA11033.1"/>
    <property type="molecule type" value="Genomic_DNA"/>
</dbReference>
<dbReference type="EMBL" id="DS544953">
    <property type="protein sequence ID" value="EDQ71334.1"/>
    <property type="molecule type" value="Genomic_DNA"/>
</dbReference>
<dbReference type="RefSeq" id="XP_001763930.1">
    <property type="nucleotide sequence ID" value="XM_001763878.1"/>
</dbReference>
<dbReference type="SMR" id="Q9ZNW2"/>
<dbReference type="PaxDb" id="3218-PP1S64_155V6.2"/>
<dbReference type="EnsemblPlants" id="Pp3c5_9590V3.2">
    <property type="protein sequence ID" value="Pp3c5_9590V3.2"/>
    <property type="gene ID" value="Pp3c5_9590"/>
</dbReference>
<dbReference type="EnsemblPlants" id="Pp3c5_9590V3.3">
    <property type="protein sequence ID" value="Pp3c5_9590V3.3"/>
    <property type="gene ID" value="Pp3c5_9590"/>
</dbReference>
<dbReference type="EnsemblPlants" id="Pp3c5_9590V3.4">
    <property type="protein sequence ID" value="Pp3c5_9590V3.4"/>
    <property type="gene ID" value="Pp3c5_9590"/>
</dbReference>
<dbReference type="EnsemblPlants" id="Pp3c5_9590V3.5">
    <property type="protein sequence ID" value="Pp3c5_9590V3.5"/>
    <property type="gene ID" value="Pp3c5_9590"/>
</dbReference>
<dbReference type="Gramene" id="Pp3c5_9590V3.2">
    <property type="protein sequence ID" value="Pp3c5_9590V3.2"/>
    <property type="gene ID" value="Pp3c5_9590"/>
</dbReference>
<dbReference type="Gramene" id="Pp3c5_9590V3.3">
    <property type="protein sequence ID" value="Pp3c5_9590V3.3"/>
    <property type="gene ID" value="Pp3c5_9590"/>
</dbReference>
<dbReference type="Gramene" id="Pp3c5_9590V3.4">
    <property type="protein sequence ID" value="Pp3c5_9590V3.4"/>
    <property type="gene ID" value="Pp3c5_9590"/>
</dbReference>
<dbReference type="Gramene" id="Pp3c5_9590V3.5">
    <property type="protein sequence ID" value="Pp3c5_9590V3.5"/>
    <property type="gene ID" value="Pp3c5_9590"/>
</dbReference>
<dbReference type="eggNOG" id="KOG4232">
    <property type="taxonomic scope" value="Eukaryota"/>
</dbReference>
<dbReference type="HOGENOM" id="CLU_016265_1_1_1"/>
<dbReference type="InParanoid" id="Q9ZNW2"/>
<dbReference type="OMA" id="CWIVIND"/>
<dbReference type="BioCyc" id="MetaCyc:MONOMER-12524"/>
<dbReference type="UniPathway" id="UPA00658"/>
<dbReference type="Proteomes" id="UP000006727">
    <property type="component" value="Chromosome 5"/>
</dbReference>
<dbReference type="GO" id="GO:0016020">
    <property type="term" value="C:membrane"/>
    <property type="evidence" value="ECO:0007669"/>
    <property type="project" value="UniProtKB-SubCell"/>
</dbReference>
<dbReference type="GO" id="GO:0046872">
    <property type="term" value="F:metal ion binding"/>
    <property type="evidence" value="ECO:0007669"/>
    <property type="project" value="UniProtKB-KW"/>
</dbReference>
<dbReference type="GO" id="GO:0016717">
    <property type="term" value="F:oxidoreductase activity, acting on paired donors, with oxidation of a pair of donors resulting in the reduction of molecular oxygen to two molecules of water"/>
    <property type="evidence" value="ECO:0000318"/>
    <property type="project" value="GO_Central"/>
</dbReference>
<dbReference type="GO" id="GO:0006629">
    <property type="term" value="P:lipid metabolic process"/>
    <property type="evidence" value="ECO:0000318"/>
    <property type="project" value="GO_Central"/>
</dbReference>
<dbReference type="GO" id="GO:0006636">
    <property type="term" value="P:unsaturated fatty acid biosynthetic process"/>
    <property type="evidence" value="ECO:0007669"/>
    <property type="project" value="UniProtKB-UniPathway"/>
</dbReference>
<dbReference type="CDD" id="cd03506">
    <property type="entry name" value="Delta6-FADS-like"/>
    <property type="match status" value="1"/>
</dbReference>
<dbReference type="Gene3D" id="3.10.120.10">
    <property type="entry name" value="Cytochrome b5-like heme/steroid binding domain"/>
    <property type="match status" value="1"/>
</dbReference>
<dbReference type="InterPro" id="IPR001199">
    <property type="entry name" value="Cyt_B5-like_heme/steroid-bd"/>
</dbReference>
<dbReference type="InterPro" id="IPR036400">
    <property type="entry name" value="Cyt_B5-like_heme/steroid_sf"/>
</dbReference>
<dbReference type="InterPro" id="IPR005804">
    <property type="entry name" value="FA_desaturase_dom"/>
</dbReference>
<dbReference type="InterPro" id="IPR012171">
    <property type="entry name" value="Fatty_acid_desaturase"/>
</dbReference>
<dbReference type="PANTHER" id="PTHR19353:SF88">
    <property type="entry name" value="DELTA(5) FATTY ACID DESATURASE FAT-4"/>
    <property type="match status" value="1"/>
</dbReference>
<dbReference type="PANTHER" id="PTHR19353">
    <property type="entry name" value="FATTY ACID DESATURASE 2"/>
    <property type="match status" value="1"/>
</dbReference>
<dbReference type="Pfam" id="PF00173">
    <property type="entry name" value="Cyt-b5"/>
    <property type="match status" value="1"/>
</dbReference>
<dbReference type="Pfam" id="PF00487">
    <property type="entry name" value="FA_desaturase"/>
    <property type="match status" value="1"/>
</dbReference>
<dbReference type="PIRSF" id="PIRSF015921">
    <property type="entry name" value="FA_sphinglp_des"/>
    <property type="match status" value="1"/>
</dbReference>
<dbReference type="SMART" id="SM01117">
    <property type="entry name" value="Cyt-b5"/>
    <property type="match status" value="1"/>
</dbReference>
<dbReference type="SUPFAM" id="SSF55856">
    <property type="entry name" value="Cytochrome b5-like heme/steroid binding domain"/>
    <property type="match status" value="1"/>
</dbReference>
<dbReference type="PROSITE" id="PS50255">
    <property type="entry name" value="CYTOCHROME_B5_2"/>
    <property type="match status" value="1"/>
</dbReference>
<organism evidence="6">
    <name type="scientific">Physcomitrium patens</name>
    <name type="common">Spreading-leaved earth moss</name>
    <name type="synonym">Physcomitrella patens</name>
    <dbReference type="NCBI Taxonomy" id="3218"/>
    <lineage>
        <taxon>Eukaryota</taxon>
        <taxon>Viridiplantae</taxon>
        <taxon>Streptophyta</taxon>
        <taxon>Embryophyta</taxon>
        <taxon>Bryophyta</taxon>
        <taxon>Bryophytina</taxon>
        <taxon>Bryopsida</taxon>
        <taxon>Funariidae</taxon>
        <taxon>Funariales</taxon>
        <taxon>Funariaceae</taxon>
        <taxon>Physcomitrium</taxon>
    </lineage>
</organism>
<sequence>MVFAGGGLQQGSLEENIDVEHIASMSLFSDFFSYVSSTVGSWSVHSIQPLKRLTSKKRVSESAAVQCISAEVQRNSSTQGTAEALAESVVKPTRRRSSQWKKSTHPLSEVAVHNKPSDCWIVVKNKVYDVSNFADEHPGGSVISTYFGRDGTDVFSSFHAASTWKILQDFYIGDVERVEPTPELLKDFREMRALFLREQLFKSSKLYYVMKLLTNVAIFAASIAIICWSKTISAVLASACMMALCFQQCGWLSHDFLHNQVFETRWLNEVVGYVIGNAVLGFSTGWWKEKHNLHHAAPNECDQTYQPIDEDIDTLPLIAWSKDILATVENKTFLRILQYQHLFFMGLLFFARGSWLFWSWRYTSTAVLSPVDRLLEKGTVLFHYFWFVGTACYLLPGWKPLVWMAVTELMSGMLLGFVFVLSHNGMEVYNSSKEFVSAQIVSTRDIKGNIFNDWFTGGLNRQIEHHLFPTMPRHNLNKIAPRVEVFCKKHGLVYEDVSIATGTCKVLKALKEVAEAAAEQHATTS</sequence>
<proteinExistence type="evidence at protein level"/>
<reference key="1">
    <citation type="journal article" date="1998" name="Plant J.">
        <title>Identification of a novel delta 6-acyl-group desaturase by targeted gene disruption in Physcomitrella patens.</title>
        <authorList>
            <person name="Girke T."/>
            <person name="Schmidt H."/>
            <person name="Zahringer U."/>
            <person name="Reski R."/>
            <person name="Heinz E."/>
        </authorList>
    </citation>
    <scope>NUCLEOTIDE SEQUENCE [GENOMIC DNA / MRNA]</scope>
    <scope>FUNCTION</scope>
    <scope>CATALYTIC ACTIVITY</scope>
    <scope>PATHWAY</scope>
    <scope>DISRUPTION PHENOTYPE</scope>
</reference>
<reference key="2">
    <citation type="journal article" date="2008" name="Science">
        <title>The Physcomitrella genome reveals evolutionary insights into the conquest of land by plants.</title>
        <authorList>
            <person name="Rensing S.A."/>
            <person name="Lang D."/>
            <person name="Zimmer A.D."/>
            <person name="Terry A."/>
            <person name="Salamov A."/>
            <person name="Shapiro H."/>
            <person name="Nishiyama T."/>
            <person name="Perroud P.-F."/>
            <person name="Lindquist E.A."/>
            <person name="Kamisugi Y."/>
            <person name="Tanahashi T."/>
            <person name="Sakakibara K."/>
            <person name="Fujita T."/>
            <person name="Oishi K."/>
            <person name="Shin-I T."/>
            <person name="Kuroki Y."/>
            <person name="Toyoda A."/>
            <person name="Suzuki Y."/>
            <person name="Hashimoto S.-I."/>
            <person name="Yamaguchi K."/>
            <person name="Sugano S."/>
            <person name="Kohara Y."/>
            <person name="Fujiyama A."/>
            <person name="Anterola A."/>
            <person name="Aoki S."/>
            <person name="Ashton N."/>
            <person name="Barbazuk W.B."/>
            <person name="Barker E."/>
            <person name="Bennetzen J.L."/>
            <person name="Blankenship R."/>
            <person name="Cho S.H."/>
            <person name="Dutcher S.K."/>
            <person name="Estelle M."/>
            <person name="Fawcett J.A."/>
            <person name="Gundlach H."/>
            <person name="Hanada K."/>
            <person name="Heyl A."/>
            <person name="Hicks K.A."/>
            <person name="Hughes J."/>
            <person name="Lohr M."/>
            <person name="Mayer K."/>
            <person name="Melkozernov A."/>
            <person name="Murata T."/>
            <person name="Nelson D.R."/>
            <person name="Pils B."/>
            <person name="Prigge M."/>
            <person name="Reiss B."/>
            <person name="Renner T."/>
            <person name="Rombauts S."/>
            <person name="Rushton P.J."/>
            <person name="Sanderfoot A."/>
            <person name="Schween G."/>
            <person name="Shiu S.-H."/>
            <person name="Stueber K."/>
            <person name="Theodoulou F.L."/>
            <person name="Tu H."/>
            <person name="Van de Peer Y."/>
            <person name="Verrier P.J."/>
            <person name="Waters E."/>
            <person name="Wood A."/>
            <person name="Yang L."/>
            <person name="Cove D."/>
            <person name="Cuming A.C."/>
            <person name="Hasebe M."/>
            <person name="Lucas S."/>
            <person name="Mishler B.D."/>
            <person name="Reski R."/>
            <person name="Grigoriev I.V."/>
            <person name="Quatrano R.S."/>
            <person name="Boore J.L."/>
        </authorList>
    </citation>
    <scope>NUCLEOTIDE SEQUENCE [LARGE SCALE GENOMIC DNA]</scope>
    <source>
        <strain>cv. Gransden 2004</strain>
    </source>
</reference>
<gene>
    <name evidence="4" type="primary">DES6</name>
    <name evidence="7" type="ORF">PHYPADRAFT_164045</name>
</gene>
<name>DES6_PHYPA</name>
<protein>
    <recommendedName>
        <fullName evidence="4">Acyl-lipid (9-3)-desaturase</fullName>
        <ecNumber evidence="3">1.14.19.47</ecNumber>
    </recommendedName>
</protein>
<keyword id="KW-0275">Fatty acid biosynthesis</keyword>
<keyword id="KW-0276">Fatty acid metabolism</keyword>
<keyword id="KW-0349">Heme</keyword>
<keyword id="KW-0408">Iron</keyword>
<keyword id="KW-0444">Lipid biosynthesis</keyword>
<keyword id="KW-0443">Lipid metabolism</keyword>
<keyword id="KW-0472">Membrane</keyword>
<keyword id="KW-0479">Metal-binding</keyword>
<keyword id="KW-0560">Oxidoreductase</keyword>
<keyword id="KW-1185">Reference proteome</keyword>
<keyword id="KW-0812">Transmembrane</keyword>
<keyword id="KW-1133">Transmembrane helix</keyword>
<comment type="function">
    <text evidence="3">Fatty acid desaturase able to introduce a delta(6)-double bond into delta(9)-unsaturated fatty-acid substrates. Can use both linoleic acid (18:2(9Z,12Z)) and alpha-linolenic acid (18:3(9Z,12Z,15Z)) as substrates. Required for the biosynthesis of arachidonic acid (20:4(5z,8Z,11Z,14Z)).</text>
</comment>
<comment type="catalytic activity">
    <reaction evidence="3">
        <text>(9Z,12Z,15Z)-octadecatrienoyl-containing glycerolipid + 2 Fe(II)-[cytochrome b5] + O2 + 2 H(+) = (6Z,9Z,12Z,15Z)-octadecatetraenoyl-containing glycerolipid + 2 Fe(III)-[cytochrome b5] + 2 H2O</text>
        <dbReference type="Rhea" id="RHEA:46288"/>
        <dbReference type="Rhea" id="RHEA-COMP:10438"/>
        <dbReference type="Rhea" id="RHEA-COMP:10439"/>
        <dbReference type="ChEBI" id="CHEBI:15377"/>
        <dbReference type="ChEBI" id="CHEBI:15378"/>
        <dbReference type="ChEBI" id="CHEBI:15379"/>
        <dbReference type="ChEBI" id="CHEBI:29033"/>
        <dbReference type="ChEBI" id="CHEBI:29034"/>
        <dbReference type="ChEBI" id="CHEBI:90078"/>
        <dbReference type="ChEBI" id="CHEBI:90079"/>
        <dbReference type="EC" id="1.14.19.47"/>
    </reaction>
</comment>
<comment type="catalytic activity">
    <reaction evidence="3">
        <text>a (9Z,12Z)-octadecadienoyl-containing glycerolipid + 2 Fe(II)-[cytochrome b5] + O2 + 2 H(+) = (6Z,9Z,12Z)-octadecatrienoyl-containing glycerolipid + 2 Fe(III)-[cytochrome b5] + 2 H2O</text>
        <dbReference type="Rhea" id="RHEA:46284"/>
        <dbReference type="Rhea" id="RHEA-COMP:10438"/>
        <dbReference type="Rhea" id="RHEA-COMP:10439"/>
        <dbReference type="ChEBI" id="CHEBI:15377"/>
        <dbReference type="ChEBI" id="CHEBI:15378"/>
        <dbReference type="ChEBI" id="CHEBI:15379"/>
        <dbReference type="ChEBI" id="CHEBI:29033"/>
        <dbReference type="ChEBI" id="CHEBI:29034"/>
        <dbReference type="ChEBI" id="CHEBI:88351"/>
        <dbReference type="ChEBI" id="CHEBI:90081"/>
        <dbReference type="EC" id="1.14.19.47"/>
    </reaction>
</comment>
<comment type="pathway">
    <text evidence="3">Lipid metabolism; polyunsaturated fatty acid biosynthesis.</text>
</comment>
<comment type="subcellular location">
    <subcellularLocation>
        <location evidence="1">Membrane</location>
        <topology evidence="1">Multi-pass membrane protein</topology>
    </subcellularLocation>
</comment>
<comment type="domain">
    <text evidence="5">The histidine box domains may contain the active site and/or be involved in metal ion binding.</text>
</comment>
<comment type="disruption phenotype">
    <text evidence="3">Increased content in linoleic acid and disappearance of gamma-linolenic and arachidonic acid.</text>
</comment>
<comment type="similarity">
    <text evidence="5">Belongs to the fatty acid desaturase type 1 family.</text>
</comment>
<feature type="chain" id="PRO_0000435461" description="Acyl-lipid (9-3)-desaturase">
    <location>
        <begin position="1"/>
        <end position="525"/>
    </location>
</feature>
<feature type="transmembrane region" description="Helical" evidence="1">
    <location>
        <begin position="216"/>
        <end position="236"/>
    </location>
</feature>
<feature type="transmembrane region" description="Helical" evidence="1">
    <location>
        <begin position="266"/>
        <end position="286"/>
    </location>
</feature>
<feature type="transmembrane region" description="Helical" evidence="1">
    <location>
        <begin position="340"/>
        <end position="360"/>
    </location>
</feature>
<feature type="transmembrane region" description="Helical" evidence="1">
    <location>
        <begin position="378"/>
        <end position="398"/>
    </location>
</feature>
<feature type="transmembrane region" description="Helical" evidence="1">
    <location>
        <begin position="401"/>
        <end position="421"/>
    </location>
</feature>
<feature type="domain" description="Cytochrome b5 heme-binding" evidence="2">
    <location>
        <begin position="102"/>
        <end position="176"/>
    </location>
</feature>
<feature type="short sequence motif" description="Histidine box-1" evidence="5">
    <location>
        <begin position="254"/>
        <end position="258"/>
    </location>
</feature>
<feature type="short sequence motif" description="Histidine box-2" evidence="5">
    <location>
        <begin position="291"/>
        <end position="295"/>
    </location>
</feature>
<feature type="short sequence motif" description="Histidine box-3" evidence="5">
    <location>
        <begin position="462"/>
        <end position="466"/>
    </location>
</feature>
<feature type="binding site" description="axial binding residue" evidence="2">
    <location>
        <position position="137"/>
    </location>
    <ligand>
        <name>heme</name>
        <dbReference type="ChEBI" id="CHEBI:30413"/>
    </ligand>
    <ligandPart>
        <name>Fe</name>
        <dbReference type="ChEBI" id="CHEBI:18248"/>
    </ligandPart>
</feature>
<feature type="binding site" description="axial binding residue" evidence="2">
    <location>
        <position position="159"/>
    </location>
    <ligand>
        <name>heme</name>
        <dbReference type="ChEBI" id="CHEBI:30413"/>
    </ligand>
    <ligandPart>
        <name>Fe</name>
        <dbReference type="ChEBI" id="CHEBI:18248"/>
    </ligandPart>
</feature>
<evidence type="ECO:0000255" key="1"/>
<evidence type="ECO:0000255" key="2">
    <source>
        <dbReference type="PROSITE-ProRule" id="PRU00279"/>
    </source>
</evidence>
<evidence type="ECO:0000269" key="3">
    <source>
    </source>
</evidence>
<evidence type="ECO:0000303" key="4">
    <source>
    </source>
</evidence>
<evidence type="ECO:0000305" key="5"/>
<evidence type="ECO:0000312" key="6">
    <source>
        <dbReference type="EMBL" id="CAA11033.1"/>
    </source>
</evidence>
<evidence type="ECO:0000312" key="7">
    <source>
        <dbReference type="EMBL" id="EDQ71334.1"/>
    </source>
</evidence>
<accession>Q9ZNW2</accession>
<accession>A9SC29</accession>
<accession>E1C9Y0</accession>